<evidence type="ECO:0000250" key="1">
    <source>
        <dbReference type="UniProtKB" id="Q96MX3"/>
    </source>
</evidence>
<evidence type="ECO:0000255" key="2">
    <source>
        <dbReference type="PROSITE-ProRule" id="PRU00042"/>
    </source>
</evidence>
<evidence type="ECO:0000256" key="3">
    <source>
        <dbReference type="SAM" id="MobiDB-lite"/>
    </source>
</evidence>
<evidence type="ECO:0000305" key="4"/>
<evidence type="ECO:0007744" key="5">
    <source>
    </source>
</evidence>
<sequence>MEASPGDEFEHSPQERDGPEIKEEEQLAPTLQVGNTSLKPDGIQCWDDLWDRREGLGKRQPRDPVPRILGEPRWGQGSNDRAAVCGECGKSFRQMSDLVKHQRTHTGEKPYKCGVCGKGFGDSSARIKHQRTHTGEKAYRVRPPAPGPPKMPRSRIPAGERPTICGECGKSFRQSSDLVKHQRTHTGEKPYKCGICGKGFGDSSARIKHQRTHRGDQLPRPVVPRRQPSPAAPAAPHRPKAQDKPYICTDCGKRFVLSCSLLSHQRSHLGPKPFGCDVCGKEFARGSDLVKHLRVHTGEKPYLCPECGKGFADSSARVKHLRTHSGQRPHACPECNRSFSLSSTLLRHRLTHVEPQDFSLAAYPVVPLIPSPPPPPLGTSPSLTPRSPSHSSDGPFGLPGLEPEPGGPQAGEPPPPLAGDKPHKCPECGKGFRRSSDLVKHHRVHTGEKPYLCPECGKGFADSSARVKHLRTHQGERTRPPPPPSTLLRPHNPPGSVPIVPQSRVQGRPSGPSQLHVCGFCGKEFPRSSDLVKHRRTHTGEKPYKCAECGKGFGDSSARIKHQRGHLALKPFGVGDGPPRPLKEESPAGLE</sequence>
<gene>
    <name type="primary">Znf48</name>
    <name type="synonym">Zfp48</name>
    <name type="synonym">Zfp553</name>
    <name type="synonym">Znf553</name>
</gene>
<comment type="function">
    <text>May be involved in transcriptional regulation.</text>
</comment>
<comment type="subcellular location">
    <subcellularLocation>
        <location evidence="4">Nucleus</location>
    </subcellularLocation>
</comment>
<comment type="similarity">
    <text evidence="4">Belongs to the krueppel C2H2-type zinc-finger protein family.</text>
</comment>
<comment type="sequence caution" evidence="4">
    <conflict type="erroneous initiation">
        <sequence resource="EMBL-CDS" id="AAH12403"/>
    </conflict>
</comment>
<proteinExistence type="evidence at protein level"/>
<reference key="1">
    <citation type="journal article" date="2005" name="Science">
        <title>The transcriptional landscape of the mammalian genome.</title>
        <authorList>
            <person name="Carninci P."/>
            <person name="Kasukawa T."/>
            <person name="Katayama S."/>
            <person name="Gough J."/>
            <person name="Frith M.C."/>
            <person name="Maeda N."/>
            <person name="Oyama R."/>
            <person name="Ravasi T."/>
            <person name="Lenhard B."/>
            <person name="Wells C."/>
            <person name="Kodzius R."/>
            <person name="Shimokawa K."/>
            <person name="Bajic V.B."/>
            <person name="Brenner S.E."/>
            <person name="Batalov S."/>
            <person name="Forrest A.R."/>
            <person name="Zavolan M."/>
            <person name="Davis M.J."/>
            <person name="Wilming L.G."/>
            <person name="Aidinis V."/>
            <person name="Allen J.E."/>
            <person name="Ambesi-Impiombato A."/>
            <person name="Apweiler R."/>
            <person name="Aturaliya R.N."/>
            <person name="Bailey T.L."/>
            <person name="Bansal M."/>
            <person name="Baxter L."/>
            <person name="Beisel K.W."/>
            <person name="Bersano T."/>
            <person name="Bono H."/>
            <person name="Chalk A.M."/>
            <person name="Chiu K.P."/>
            <person name="Choudhary V."/>
            <person name="Christoffels A."/>
            <person name="Clutterbuck D.R."/>
            <person name="Crowe M.L."/>
            <person name="Dalla E."/>
            <person name="Dalrymple B.P."/>
            <person name="de Bono B."/>
            <person name="Della Gatta G."/>
            <person name="di Bernardo D."/>
            <person name="Down T."/>
            <person name="Engstrom P."/>
            <person name="Fagiolini M."/>
            <person name="Faulkner G."/>
            <person name="Fletcher C.F."/>
            <person name="Fukushima T."/>
            <person name="Furuno M."/>
            <person name="Futaki S."/>
            <person name="Gariboldi M."/>
            <person name="Georgii-Hemming P."/>
            <person name="Gingeras T.R."/>
            <person name="Gojobori T."/>
            <person name="Green R.E."/>
            <person name="Gustincich S."/>
            <person name="Harbers M."/>
            <person name="Hayashi Y."/>
            <person name="Hensch T.K."/>
            <person name="Hirokawa N."/>
            <person name="Hill D."/>
            <person name="Huminiecki L."/>
            <person name="Iacono M."/>
            <person name="Ikeo K."/>
            <person name="Iwama A."/>
            <person name="Ishikawa T."/>
            <person name="Jakt M."/>
            <person name="Kanapin A."/>
            <person name="Katoh M."/>
            <person name="Kawasawa Y."/>
            <person name="Kelso J."/>
            <person name="Kitamura H."/>
            <person name="Kitano H."/>
            <person name="Kollias G."/>
            <person name="Krishnan S.P."/>
            <person name="Kruger A."/>
            <person name="Kummerfeld S.K."/>
            <person name="Kurochkin I.V."/>
            <person name="Lareau L.F."/>
            <person name="Lazarevic D."/>
            <person name="Lipovich L."/>
            <person name="Liu J."/>
            <person name="Liuni S."/>
            <person name="McWilliam S."/>
            <person name="Madan Babu M."/>
            <person name="Madera M."/>
            <person name="Marchionni L."/>
            <person name="Matsuda H."/>
            <person name="Matsuzawa S."/>
            <person name="Miki H."/>
            <person name="Mignone F."/>
            <person name="Miyake S."/>
            <person name="Morris K."/>
            <person name="Mottagui-Tabar S."/>
            <person name="Mulder N."/>
            <person name="Nakano N."/>
            <person name="Nakauchi H."/>
            <person name="Ng P."/>
            <person name="Nilsson R."/>
            <person name="Nishiguchi S."/>
            <person name="Nishikawa S."/>
            <person name="Nori F."/>
            <person name="Ohara O."/>
            <person name="Okazaki Y."/>
            <person name="Orlando V."/>
            <person name="Pang K.C."/>
            <person name="Pavan W.J."/>
            <person name="Pavesi G."/>
            <person name="Pesole G."/>
            <person name="Petrovsky N."/>
            <person name="Piazza S."/>
            <person name="Reed J."/>
            <person name="Reid J.F."/>
            <person name="Ring B.Z."/>
            <person name="Ringwald M."/>
            <person name="Rost B."/>
            <person name="Ruan Y."/>
            <person name="Salzberg S.L."/>
            <person name="Sandelin A."/>
            <person name="Schneider C."/>
            <person name="Schoenbach C."/>
            <person name="Sekiguchi K."/>
            <person name="Semple C.A."/>
            <person name="Seno S."/>
            <person name="Sessa L."/>
            <person name="Sheng Y."/>
            <person name="Shibata Y."/>
            <person name="Shimada H."/>
            <person name="Shimada K."/>
            <person name="Silva D."/>
            <person name="Sinclair B."/>
            <person name="Sperling S."/>
            <person name="Stupka E."/>
            <person name="Sugiura K."/>
            <person name="Sultana R."/>
            <person name="Takenaka Y."/>
            <person name="Taki K."/>
            <person name="Tammoja K."/>
            <person name="Tan S.L."/>
            <person name="Tang S."/>
            <person name="Taylor M.S."/>
            <person name="Tegner J."/>
            <person name="Teichmann S.A."/>
            <person name="Ueda H.R."/>
            <person name="van Nimwegen E."/>
            <person name="Verardo R."/>
            <person name="Wei C.L."/>
            <person name="Yagi K."/>
            <person name="Yamanishi H."/>
            <person name="Zabarovsky E."/>
            <person name="Zhu S."/>
            <person name="Zimmer A."/>
            <person name="Hide W."/>
            <person name="Bult C."/>
            <person name="Grimmond S.M."/>
            <person name="Teasdale R.D."/>
            <person name="Liu E.T."/>
            <person name="Brusic V."/>
            <person name="Quackenbush J."/>
            <person name="Wahlestedt C."/>
            <person name="Mattick J.S."/>
            <person name="Hume D.A."/>
            <person name="Kai C."/>
            <person name="Sasaki D."/>
            <person name="Tomaru Y."/>
            <person name="Fukuda S."/>
            <person name="Kanamori-Katayama M."/>
            <person name="Suzuki M."/>
            <person name="Aoki J."/>
            <person name="Arakawa T."/>
            <person name="Iida J."/>
            <person name="Imamura K."/>
            <person name="Itoh M."/>
            <person name="Kato T."/>
            <person name="Kawaji H."/>
            <person name="Kawagashira N."/>
            <person name="Kawashima T."/>
            <person name="Kojima M."/>
            <person name="Kondo S."/>
            <person name="Konno H."/>
            <person name="Nakano K."/>
            <person name="Ninomiya N."/>
            <person name="Nishio T."/>
            <person name="Okada M."/>
            <person name="Plessy C."/>
            <person name="Shibata K."/>
            <person name="Shiraki T."/>
            <person name="Suzuki S."/>
            <person name="Tagami M."/>
            <person name="Waki K."/>
            <person name="Watahiki A."/>
            <person name="Okamura-Oho Y."/>
            <person name="Suzuki H."/>
            <person name="Kawai J."/>
            <person name="Hayashizaki Y."/>
        </authorList>
    </citation>
    <scope>NUCLEOTIDE SEQUENCE [LARGE SCALE MRNA]</scope>
    <source>
        <strain>C57BL/6J</strain>
        <tissue>Embryonic stem cell</tissue>
        <tissue>Head</tissue>
        <tissue>Heart</tissue>
    </source>
</reference>
<reference key="2">
    <citation type="journal article" date="2004" name="Genome Res.">
        <title>The status, quality, and expansion of the NIH full-length cDNA project: the Mammalian Gene Collection (MGC).</title>
        <authorList>
            <consortium name="The MGC Project Team"/>
        </authorList>
    </citation>
    <scope>NUCLEOTIDE SEQUENCE [LARGE SCALE MRNA]</scope>
    <source>
        <strain>FVB/N</strain>
        <tissue>Colon</tissue>
        <tissue>Mammary tumor</tissue>
    </source>
</reference>
<reference key="3">
    <citation type="journal article" date="2007" name="Proc. Natl. Acad. Sci. U.S.A.">
        <title>Large-scale phosphorylation analysis of mouse liver.</title>
        <authorList>
            <person name="Villen J."/>
            <person name="Beausoleil S.A."/>
            <person name="Gerber S.A."/>
            <person name="Gygi S.P."/>
        </authorList>
    </citation>
    <scope>ACETYLATION [LARGE SCALE ANALYSIS] AT MET-1</scope>
    <scope>PHOSPHORYLATION [LARGE SCALE ANALYSIS] AT SER-12</scope>
    <scope>IDENTIFICATION BY MASS SPECTROMETRY [LARGE SCALE ANALYSIS]</scope>
    <source>
        <tissue>Liver</tissue>
    </source>
</reference>
<accession>Q3US17</accession>
<accession>Q3UFP3</accession>
<accession>Q8R0V0</accession>
<accession>Q921H7</accession>
<organism>
    <name type="scientific">Mus musculus</name>
    <name type="common">Mouse</name>
    <dbReference type="NCBI Taxonomy" id="10090"/>
    <lineage>
        <taxon>Eukaryota</taxon>
        <taxon>Metazoa</taxon>
        <taxon>Chordata</taxon>
        <taxon>Craniata</taxon>
        <taxon>Vertebrata</taxon>
        <taxon>Euteleostomi</taxon>
        <taxon>Mammalia</taxon>
        <taxon>Eutheria</taxon>
        <taxon>Euarchontoglires</taxon>
        <taxon>Glires</taxon>
        <taxon>Rodentia</taxon>
        <taxon>Myomorpha</taxon>
        <taxon>Muroidea</taxon>
        <taxon>Muridae</taxon>
        <taxon>Murinae</taxon>
        <taxon>Mus</taxon>
        <taxon>Mus</taxon>
    </lineage>
</organism>
<name>ZNF48_MOUSE</name>
<protein>
    <recommendedName>
        <fullName>Zinc finger protein 48</fullName>
    </recommendedName>
    <alternativeName>
        <fullName>Zinc finger protein 553</fullName>
    </alternativeName>
</protein>
<keyword id="KW-0007">Acetylation</keyword>
<keyword id="KW-0238">DNA-binding</keyword>
<keyword id="KW-1017">Isopeptide bond</keyword>
<keyword id="KW-0479">Metal-binding</keyword>
<keyword id="KW-0539">Nucleus</keyword>
<keyword id="KW-0597">Phosphoprotein</keyword>
<keyword id="KW-1185">Reference proteome</keyword>
<keyword id="KW-0677">Repeat</keyword>
<keyword id="KW-0804">Transcription</keyword>
<keyword id="KW-0805">Transcription regulation</keyword>
<keyword id="KW-0832">Ubl conjugation</keyword>
<keyword id="KW-0862">Zinc</keyword>
<keyword id="KW-0863">Zinc-finger</keyword>
<dbReference type="EMBL" id="AK049208">
    <property type="protein sequence ID" value="BAC33610.1"/>
    <property type="molecule type" value="mRNA"/>
</dbReference>
<dbReference type="EMBL" id="AK140924">
    <property type="protein sequence ID" value="BAE24520.1"/>
    <property type="molecule type" value="mRNA"/>
</dbReference>
<dbReference type="EMBL" id="AK146581">
    <property type="protein sequence ID" value="BAE27277.1"/>
    <property type="molecule type" value="mRNA"/>
</dbReference>
<dbReference type="EMBL" id="AK148378">
    <property type="protein sequence ID" value="BAE28517.1"/>
    <property type="molecule type" value="mRNA"/>
</dbReference>
<dbReference type="EMBL" id="BC012403">
    <property type="protein sequence ID" value="AAH12403.1"/>
    <property type="status" value="ALT_INIT"/>
    <property type="molecule type" value="mRNA"/>
</dbReference>
<dbReference type="EMBL" id="BC026401">
    <property type="protein sequence ID" value="AAH26401.1"/>
    <property type="molecule type" value="mRNA"/>
</dbReference>
<dbReference type="CCDS" id="CCDS21860.1"/>
<dbReference type="RefSeq" id="NP_666313.1">
    <property type="nucleotide sequence ID" value="NM_146201.1"/>
</dbReference>
<dbReference type="RefSeq" id="XP_006507802.1">
    <property type="nucleotide sequence ID" value="XM_006507739.1"/>
</dbReference>
<dbReference type="SMR" id="Q3US17"/>
<dbReference type="BioGRID" id="231466">
    <property type="interactions" value="1"/>
</dbReference>
<dbReference type="FunCoup" id="Q3US17">
    <property type="interactions" value="634"/>
</dbReference>
<dbReference type="STRING" id="10090.ENSMUSP00000101919"/>
<dbReference type="iPTMnet" id="Q3US17"/>
<dbReference type="PhosphoSitePlus" id="Q3US17"/>
<dbReference type="jPOST" id="Q3US17"/>
<dbReference type="PaxDb" id="10090-ENSMUSP00000101919"/>
<dbReference type="PeptideAtlas" id="Q3US17"/>
<dbReference type="ProteomicsDB" id="299605"/>
<dbReference type="Pumba" id="Q3US17"/>
<dbReference type="Antibodypedia" id="13692">
    <property type="antibodies" value="33 antibodies from 15 providers"/>
</dbReference>
<dbReference type="DNASU" id="233887"/>
<dbReference type="Ensembl" id="ENSMUST00000056232.7">
    <property type="protein sequence ID" value="ENSMUSP00000060967.7"/>
    <property type="gene ID" value="ENSMUSG00000045598.11"/>
</dbReference>
<dbReference type="Ensembl" id="ENSMUST00000106312.4">
    <property type="protein sequence ID" value="ENSMUSP00000101919.4"/>
    <property type="gene ID" value="ENSMUSG00000045598.11"/>
</dbReference>
<dbReference type="GeneID" id="233887"/>
<dbReference type="KEGG" id="mmu:233887"/>
<dbReference type="UCSC" id="uc009jur.1">
    <property type="organism name" value="mouse"/>
</dbReference>
<dbReference type="AGR" id="MGI:2384725"/>
<dbReference type="CTD" id="233887"/>
<dbReference type="MGI" id="MGI:2384725">
    <property type="gene designation" value="Zfp553"/>
</dbReference>
<dbReference type="VEuPathDB" id="HostDB:ENSMUSG00000045598"/>
<dbReference type="eggNOG" id="KOG1721">
    <property type="taxonomic scope" value="Eukaryota"/>
</dbReference>
<dbReference type="GeneTree" id="ENSGT00940000162332"/>
<dbReference type="HOGENOM" id="CLU_452421_0_0_1"/>
<dbReference type="InParanoid" id="Q3US17"/>
<dbReference type="OMA" id="MEPQDFG"/>
<dbReference type="OrthoDB" id="3437960at2759"/>
<dbReference type="PhylomeDB" id="Q3US17"/>
<dbReference type="TreeFam" id="TF338489"/>
<dbReference type="BioGRID-ORCS" id="233887">
    <property type="hits" value="3 hits in 79 CRISPR screens"/>
</dbReference>
<dbReference type="ChiTaRS" id="Zfp553">
    <property type="organism name" value="mouse"/>
</dbReference>
<dbReference type="PRO" id="PR:Q3US17"/>
<dbReference type="Proteomes" id="UP000000589">
    <property type="component" value="Chromosome 7"/>
</dbReference>
<dbReference type="RNAct" id="Q3US17">
    <property type="molecule type" value="protein"/>
</dbReference>
<dbReference type="Bgee" id="ENSMUSG00000045598">
    <property type="expression patterns" value="Expressed in rostral migratory stream and 273 other cell types or tissues"/>
</dbReference>
<dbReference type="GO" id="GO:0005634">
    <property type="term" value="C:nucleus"/>
    <property type="evidence" value="ECO:0007669"/>
    <property type="project" value="UniProtKB-SubCell"/>
</dbReference>
<dbReference type="GO" id="GO:0003677">
    <property type="term" value="F:DNA binding"/>
    <property type="evidence" value="ECO:0007669"/>
    <property type="project" value="UniProtKB-KW"/>
</dbReference>
<dbReference type="GO" id="GO:0042802">
    <property type="term" value="F:identical protein binding"/>
    <property type="evidence" value="ECO:0007669"/>
    <property type="project" value="Ensembl"/>
</dbReference>
<dbReference type="GO" id="GO:0008270">
    <property type="term" value="F:zinc ion binding"/>
    <property type="evidence" value="ECO:0007669"/>
    <property type="project" value="UniProtKB-KW"/>
</dbReference>
<dbReference type="FunFam" id="3.30.160.60:FF:000823">
    <property type="entry name" value="replication initiator 1 isoform X1"/>
    <property type="match status" value="1"/>
</dbReference>
<dbReference type="FunFam" id="3.30.160.60:FF:000512">
    <property type="entry name" value="zinc finger protein 197 isoform X1"/>
    <property type="match status" value="1"/>
</dbReference>
<dbReference type="FunFam" id="3.30.160.60:FF:000277">
    <property type="entry name" value="Zinc finger protein 48"/>
    <property type="match status" value="5"/>
</dbReference>
<dbReference type="FunFam" id="3.30.160.60:FF:000950">
    <property type="entry name" value="Zinc finger protein 48"/>
    <property type="match status" value="1"/>
</dbReference>
<dbReference type="FunFam" id="3.30.160.60:FF:000418">
    <property type="entry name" value="zinc finger protein 48"/>
    <property type="match status" value="3"/>
</dbReference>
<dbReference type="FunFam" id="3.30.160.60:FF:001245">
    <property type="entry name" value="zinc finger protein 48"/>
    <property type="match status" value="1"/>
</dbReference>
<dbReference type="Gene3D" id="3.30.160.60">
    <property type="entry name" value="Classic Zinc Finger"/>
    <property type="match status" value="12"/>
</dbReference>
<dbReference type="InterPro" id="IPR036236">
    <property type="entry name" value="Znf_C2H2_sf"/>
</dbReference>
<dbReference type="InterPro" id="IPR013087">
    <property type="entry name" value="Znf_C2H2_type"/>
</dbReference>
<dbReference type="PANTHER" id="PTHR23226:SF416">
    <property type="entry name" value="FI01424P"/>
    <property type="match status" value="1"/>
</dbReference>
<dbReference type="PANTHER" id="PTHR23226">
    <property type="entry name" value="ZINC FINGER AND SCAN DOMAIN-CONTAINING"/>
    <property type="match status" value="1"/>
</dbReference>
<dbReference type="Pfam" id="PF00096">
    <property type="entry name" value="zf-C2H2"/>
    <property type="match status" value="12"/>
</dbReference>
<dbReference type="SMART" id="SM00355">
    <property type="entry name" value="ZnF_C2H2"/>
    <property type="match status" value="12"/>
</dbReference>
<dbReference type="SUPFAM" id="SSF57667">
    <property type="entry name" value="beta-beta-alpha zinc fingers"/>
    <property type="match status" value="6"/>
</dbReference>
<dbReference type="PROSITE" id="PS00028">
    <property type="entry name" value="ZINC_FINGER_C2H2_1"/>
    <property type="match status" value="12"/>
</dbReference>
<dbReference type="PROSITE" id="PS50157">
    <property type="entry name" value="ZINC_FINGER_C2H2_2"/>
    <property type="match status" value="12"/>
</dbReference>
<feature type="chain" id="PRO_0000234587" description="Zinc finger protein 48">
    <location>
        <begin position="1"/>
        <end position="591"/>
    </location>
</feature>
<feature type="zinc finger region" description="C2H2-type 1" evidence="2">
    <location>
        <begin position="83"/>
        <end position="105"/>
    </location>
</feature>
<feature type="zinc finger region" description="C2H2-type 2" evidence="2">
    <location>
        <begin position="111"/>
        <end position="133"/>
    </location>
</feature>
<feature type="zinc finger region" description="C2H2-type 3" evidence="2">
    <location>
        <begin position="163"/>
        <end position="185"/>
    </location>
</feature>
<feature type="zinc finger region" description="C2H2-type 4" evidence="2">
    <location>
        <begin position="191"/>
        <end position="213"/>
    </location>
</feature>
<feature type="zinc finger region" description="C2H2-type 5" evidence="2">
    <location>
        <begin position="246"/>
        <end position="268"/>
    </location>
</feature>
<feature type="zinc finger region" description="C2H2-type 6" evidence="2">
    <location>
        <begin position="274"/>
        <end position="296"/>
    </location>
</feature>
<feature type="zinc finger region" description="C2H2-type 7" evidence="2">
    <location>
        <begin position="302"/>
        <end position="324"/>
    </location>
</feature>
<feature type="zinc finger region" description="C2H2-type 8" evidence="2">
    <location>
        <begin position="330"/>
        <end position="352"/>
    </location>
</feature>
<feature type="zinc finger region" description="C2H2-type 9" evidence="2">
    <location>
        <begin position="423"/>
        <end position="445"/>
    </location>
</feature>
<feature type="zinc finger region" description="C2H2-type 10" evidence="2">
    <location>
        <begin position="451"/>
        <end position="473"/>
    </location>
</feature>
<feature type="zinc finger region" description="C2H2-type 11" evidence="2">
    <location>
        <begin position="516"/>
        <end position="538"/>
    </location>
</feature>
<feature type="zinc finger region" description="C2H2-type 12" evidence="2">
    <location>
        <begin position="544"/>
        <end position="566"/>
    </location>
</feature>
<feature type="region of interest" description="Disordered" evidence="3">
    <location>
        <begin position="1"/>
        <end position="24"/>
    </location>
</feature>
<feature type="region of interest" description="Disordered" evidence="3">
    <location>
        <begin position="55"/>
        <end position="80"/>
    </location>
</feature>
<feature type="region of interest" description="Disordered" evidence="3">
    <location>
        <begin position="131"/>
        <end position="160"/>
    </location>
</feature>
<feature type="region of interest" description="Disordered" evidence="3">
    <location>
        <begin position="206"/>
        <end position="241"/>
    </location>
</feature>
<feature type="region of interest" description="Disordered" evidence="3">
    <location>
        <begin position="372"/>
        <end position="429"/>
    </location>
</feature>
<feature type="region of interest" description="Disordered" evidence="3">
    <location>
        <begin position="464"/>
        <end position="512"/>
    </location>
</feature>
<feature type="region of interest" description="Disordered" evidence="3">
    <location>
        <begin position="564"/>
        <end position="591"/>
    </location>
</feature>
<feature type="compositionally biased region" description="Basic and acidic residues" evidence="3">
    <location>
        <begin position="8"/>
        <end position="24"/>
    </location>
</feature>
<feature type="compositionally biased region" description="Basic and acidic residues" evidence="3">
    <location>
        <begin position="55"/>
        <end position="65"/>
    </location>
</feature>
<feature type="compositionally biased region" description="Low complexity" evidence="3">
    <location>
        <begin position="224"/>
        <end position="235"/>
    </location>
</feature>
<feature type="compositionally biased region" description="Low complexity" evidence="3">
    <location>
        <begin position="379"/>
        <end position="404"/>
    </location>
</feature>
<feature type="compositionally biased region" description="Pro residues" evidence="3">
    <location>
        <begin position="480"/>
        <end position="496"/>
    </location>
</feature>
<feature type="compositionally biased region" description="Basic and acidic residues" evidence="3">
    <location>
        <begin position="581"/>
        <end position="591"/>
    </location>
</feature>
<feature type="modified residue" description="N-acetylmethionine" evidence="5">
    <location>
        <position position="1"/>
    </location>
</feature>
<feature type="modified residue" description="Phosphoserine" evidence="5">
    <location>
        <position position="12"/>
    </location>
</feature>
<feature type="cross-link" description="Glycyl lysine isopeptide (Lys-Gly) (interchain with G-Cter in SUMO2)" evidence="1">
    <location>
        <position position="58"/>
    </location>
</feature>
<feature type="cross-link" description="Glycyl lysine isopeptide (Lys-Gly) (interchain with G-Cter in SUMO2)" evidence="1">
    <location>
        <position position="150"/>
    </location>
</feature>
<feature type="cross-link" description="Glycyl lysine isopeptide (Lys-Gly) (interchain with G-Cter in SUMO2)" evidence="1">
    <location>
        <position position="240"/>
    </location>
</feature>
<feature type="cross-link" description="Glycyl lysine isopeptide (Lys-Gly) (interchain with G-Cter in SUMO2)" evidence="1">
    <location>
        <position position="300"/>
    </location>
</feature>
<feature type="cross-link" description="Glycyl lysine isopeptide (Lys-Gly) (interchain with G-Cter in SUMO2)" evidence="1">
    <location>
        <position position="449"/>
    </location>
</feature>
<feature type="cross-link" description="Glycyl lysine isopeptide (Lys-Gly) (interchain with G-Cter in SUMO2)" evidence="1">
    <location>
        <position position="583"/>
    </location>
</feature>
<feature type="sequence conflict" description="In Ref. 1; BAE24520." evidence="4" ref="1">
    <original>G</original>
    <variation>E</variation>
    <location>
        <position position="6"/>
    </location>
</feature>
<feature type="sequence conflict" description="In Ref. 1; BAE28517." evidence="4" ref="1">
    <original>G</original>
    <variation>V</variation>
    <location>
        <position position="194"/>
    </location>
</feature>
<feature type="sequence conflict" description="In Ref. 1; BAE28517." evidence="4" ref="1">
    <original>S</original>
    <variation>F</variation>
    <location>
        <position position="503"/>
    </location>
</feature>